<protein>
    <recommendedName>
        <fullName evidence="1">Dihydroorotate dehydrogenase (quinone)</fullName>
        <ecNumber evidence="1">1.3.5.2</ecNumber>
    </recommendedName>
    <alternativeName>
        <fullName evidence="1">DHOdehase</fullName>
        <shortName evidence="1">DHOD</shortName>
        <shortName evidence="1">DHODase</shortName>
    </alternativeName>
    <alternativeName>
        <fullName evidence="1">Dihydroorotate oxidase</fullName>
    </alternativeName>
</protein>
<comment type="function">
    <text evidence="1">Catalyzes the conversion of dihydroorotate to orotate with quinone as electron acceptor.</text>
</comment>
<comment type="catalytic activity">
    <reaction evidence="1">
        <text>(S)-dihydroorotate + a quinone = orotate + a quinol</text>
        <dbReference type="Rhea" id="RHEA:30187"/>
        <dbReference type="ChEBI" id="CHEBI:24646"/>
        <dbReference type="ChEBI" id="CHEBI:30839"/>
        <dbReference type="ChEBI" id="CHEBI:30864"/>
        <dbReference type="ChEBI" id="CHEBI:132124"/>
        <dbReference type="EC" id="1.3.5.2"/>
    </reaction>
</comment>
<comment type="cofactor">
    <cofactor evidence="1">
        <name>FMN</name>
        <dbReference type="ChEBI" id="CHEBI:58210"/>
    </cofactor>
    <text evidence="1">Binds 1 FMN per subunit.</text>
</comment>
<comment type="pathway">
    <text evidence="1">Pyrimidine metabolism; UMP biosynthesis via de novo pathway; orotate from (S)-dihydroorotate (quinone route): step 1/1.</text>
</comment>
<comment type="subunit">
    <text evidence="1">Monomer.</text>
</comment>
<comment type="subcellular location">
    <subcellularLocation>
        <location evidence="1">Cell membrane</location>
        <topology evidence="1">Peripheral membrane protein</topology>
    </subcellularLocation>
</comment>
<comment type="similarity">
    <text evidence="1">Belongs to the dihydroorotate dehydrogenase family. Type 2 subfamily.</text>
</comment>
<evidence type="ECO:0000255" key="1">
    <source>
        <dbReference type="HAMAP-Rule" id="MF_00225"/>
    </source>
</evidence>
<name>PYRD_PSYCK</name>
<organism>
    <name type="scientific">Psychrobacter cryohalolentis (strain ATCC BAA-1226 / DSM 17306 / VKM B-2378 / K5)</name>
    <dbReference type="NCBI Taxonomy" id="335284"/>
    <lineage>
        <taxon>Bacteria</taxon>
        <taxon>Pseudomonadati</taxon>
        <taxon>Pseudomonadota</taxon>
        <taxon>Gammaproteobacteria</taxon>
        <taxon>Moraxellales</taxon>
        <taxon>Moraxellaceae</taxon>
        <taxon>Psychrobacter</taxon>
    </lineage>
</organism>
<sequence>MSYALLRPFLFNMDPEHAHEMTLSLLDKAHKARVLGLVYGQSMQPTDCMGLQFSNPVGLAAGLDKNGDYIDALAELGFGFIEVGTVTPKPQAGNDRPRLFRLKQADAIINRMGFNNEGVDYLIENVQRCKYKGNIGINIGKNAATPVEKAADDYVYCLERVYPHASYITVNISSPNTANLRDLQSGEALTHLLDAIKNRHSQLATEYGFYVPLVLKVAPDLDPIQVDYISQQLLDFEIDGLIATNTTLSRVGVEDLPDGDQAGGLSGRPVSHISTQILQQFSDQLDGKVALIGVGGIDSGAKAVKKIEAGADMVQLYSGLIYKGPGLVQSCIQSIGGYYDAMEN</sequence>
<proteinExistence type="inferred from homology"/>
<accession>Q1QBS1</accession>
<gene>
    <name evidence="1" type="primary">pyrD</name>
    <name type="ordered locus">Pcryo_1101</name>
</gene>
<keyword id="KW-1003">Cell membrane</keyword>
<keyword id="KW-0285">Flavoprotein</keyword>
<keyword id="KW-0288">FMN</keyword>
<keyword id="KW-0472">Membrane</keyword>
<keyword id="KW-0560">Oxidoreductase</keyword>
<keyword id="KW-0665">Pyrimidine biosynthesis</keyword>
<reference key="1">
    <citation type="submission" date="2006-03" db="EMBL/GenBank/DDBJ databases">
        <title>Complete sequence of chromosome of Psychrobacter cryohalolentis K5.</title>
        <authorList>
            <consortium name="US DOE Joint Genome Institute"/>
            <person name="Copeland A."/>
            <person name="Lucas S."/>
            <person name="Lapidus A."/>
            <person name="Barry K."/>
            <person name="Detter J.C."/>
            <person name="Glavina T."/>
            <person name="Hammon N."/>
            <person name="Israni S."/>
            <person name="Dalin E."/>
            <person name="Tice H."/>
            <person name="Pitluck S."/>
            <person name="Brettin T."/>
            <person name="Bruce D."/>
            <person name="Han C."/>
            <person name="Tapia R."/>
            <person name="Sims D.R."/>
            <person name="Gilna P."/>
            <person name="Schmutz J."/>
            <person name="Larimer F."/>
            <person name="Land M."/>
            <person name="Hauser L."/>
            <person name="Kyrpides N."/>
            <person name="Kim E."/>
            <person name="Richardson P."/>
        </authorList>
    </citation>
    <scope>NUCLEOTIDE SEQUENCE [LARGE SCALE GENOMIC DNA]</scope>
    <source>
        <strain>ATCC BAA-1226 / DSM 17306 / VKM B-2378 / K5</strain>
    </source>
</reference>
<feature type="chain" id="PRO_1000024208" description="Dihydroorotate dehydrogenase (quinone)">
    <location>
        <begin position="1"/>
        <end position="344"/>
    </location>
</feature>
<feature type="active site" description="Nucleophile" evidence="1">
    <location>
        <position position="174"/>
    </location>
</feature>
<feature type="binding site" evidence="1">
    <location>
        <begin position="61"/>
        <end position="65"/>
    </location>
    <ligand>
        <name>FMN</name>
        <dbReference type="ChEBI" id="CHEBI:58210"/>
    </ligand>
</feature>
<feature type="binding site" evidence="1">
    <location>
        <position position="65"/>
    </location>
    <ligand>
        <name>substrate</name>
    </ligand>
</feature>
<feature type="binding site" evidence="1">
    <location>
        <position position="85"/>
    </location>
    <ligand>
        <name>FMN</name>
        <dbReference type="ChEBI" id="CHEBI:58210"/>
    </ligand>
</feature>
<feature type="binding site" evidence="1">
    <location>
        <begin position="110"/>
        <end position="114"/>
    </location>
    <ligand>
        <name>substrate</name>
    </ligand>
</feature>
<feature type="binding site" evidence="1">
    <location>
        <position position="138"/>
    </location>
    <ligand>
        <name>FMN</name>
        <dbReference type="ChEBI" id="CHEBI:58210"/>
    </ligand>
</feature>
<feature type="binding site" evidence="1">
    <location>
        <position position="171"/>
    </location>
    <ligand>
        <name>FMN</name>
        <dbReference type="ChEBI" id="CHEBI:58210"/>
    </ligand>
</feature>
<feature type="binding site" evidence="1">
    <location>
        <position position="171"/>
    </location>
    <ligand>
        <name>substrate</name>
    </ligand>
</feature>
<feature type="binding site" evidence="1">
    <location>
        <position position="176"/>
    </location>
    <ligand>
        <name>substrate</name>
    </ligand>
</feature>
<feature type="binding site" evidence="1">
    <location>
        <position position="216"/>
    </location>
    <ligand>
        <name>FMN</name>
        <dbReference type="ChEBI" id="CHEBI:58210"/>
    </ligand>
</feature>
<feature type="binding site" evidence="1">
    <location>
        <position position="244"/>
    </location>
    <ligand>
        <name>FMN</name>
        <dbReference type="ChEBI" id="CHEBI:58210"/>
    </ligand>
</feature>
<feature type="binding site" evidence="1">
    <location>
        <begin position="245"/>
        <end position="246"/>
    </location>
    <ligand>
        <name>substrate</name>
    </ligand>
</feature>
<feature type="binding site" evidence="1">
    <location>
        <position position="267"/>
    </location>
    <ligand>
        <name>FMN</name>
        <dbReference type="ChEBI" id="CHEBI:58210"/>
    </ligand>
</feature>
<feature type="binding site" evidence="1">
    <location>
        <position position="296"/>
    </location>
    <ligand>
        <name>FMN</name>
        <dbReference type="ChEBI" id="CHEBI:58210"/>
    </ligand>
</feature>
<feature type="binding site" evidence="1">
    <location>
        <begin position="317"/>
        <end position="318"/>
    </location>
    <ligand>
        <name>FMN</name>
        <dbReference type="ChEBI" id="CHEBI:58210"/>
    </ligand>
</feature>
<dbReference type="EC" id="1.3.5.2" evidence="1"/>
<dbReference type="EMBL" id="CP000323">
    <property type="protein sequence ID" value="ABE74882.1"/>
    <property type="molecule type" value="Genomic_DNA"/>
</dbReference>
<dbReference type="RefSeq" id="WP_011513438.1">
    <property type="nucleotide sequence ID" value="NC_007969.1"/>
</dbReference>
<dbReference type="SMR" id="Q1QBS1"/>
<dbReference type="STRING" id="335284.Pcryo_1101"/>
<dbReference type="KEGG" id="pcr:Pcryo_1101"/>
<dbReference type="eggNOG" id="COG0167">
    <property type="taxonomic scope" value="Bacteria"/>
</dbReference>
<dbReference type="HOGENOM" id="CLU_013640_2_0_6"/>
<dbReference type="UniPathway" id="UPA00070">
    <property type="reaction ID" value="UER00946"/>
</dbReference>
<dbReference type="Proteomes" id="UP000002425">
    <property type="component" value="Chromosome"/>
</dbReference>
<dbReference type="GO" id="GO:0005737">
    <property type="term" value="C:cytoplasm"/>
    <property type="evidence" value="ECO:0007669"/>
    <property type="project" value="InterPro"/>
</dbReference>
<dbReference type="GO" id="GO:0005886">
    <property type="term" value="C:plasma membrane"/>
    <property type="evidence" value="ECO:0007669"/>
    <property type="project" value="UniProtKB-SubCell"/>
</dbReference>
<dbReference type="GO" id="GO:0106430">
    <property type="term" value="F:dihydroorotate dehydrogenase (quinone) activity"/>
    <property type="evidence" value="ECO:0007669"/>
    <property type="project" value="UniProtKB-EC"/>
</dbReference>
<dbReference type="GO" id="GO:0006207">
    <property type="term" value="P:'de novo' pyrimidine nucleobase biosynthetic process"/>
    <property type="evidence" value="ECO:0007669"/>
    <property type="project" value="InterPro"/>
</dbReference>
<dbReference type="GO" id="GO:0044205">
    <property type="term" value="P:'de novo' UMP biosynthetic process"/>
    <property type="evidence" value="ECO:0007669"/>
    <property type="project" value="UniProtKB-UniRule"/>
</dbReference>
<dbReference type="CDD" id="cd04738">
    <property type="entry name" value="DHOD_2_like"/>
    <property type="match status" value="1"/>
</dbReference>
<dbReference type="Gene3D" id="3.20.20.70">
    <property type="entry name" value="Aldolase class I"/>
    <property type="match status" value="1"/>
</dbReference>
<dbReference type="HAMAP" id="MF_00225">
    <property type="entry name" value="DHO_dh_type2"/>
    <property type="match status" value="1"/>
</dbReference>
<dbReference type="InterPro" id="IPR013785">
    <property type="entry name" value="Aldolase_TIM"/>
</dbReference>
<dbReference type="InterPro" id="IPR050074">
    <property type="entry name" value="DHO_dehydrogenase"/>
</dbReference>
<dbReference type="InterPro" id="IPR012135">
    <property type="entry name" value="Dihydroorotate_DH_1_2"/>
</dbReference>
<dbReference type="InterPro" id="IPR005719">
    <property type="entry name" value="Dihydroorotate_DH_2"/>
</dbReference>
<dbReference type="InterPro" id="IPR005720">
    <property type="entry name" value="Dihydroorotate_DH_cat"/>
</dbReference>
<dbReference type="InterPro" id="IPR001295">
    <property type="entry name" value="Dihydroorotate_DH_CS"/>
</dbReference>
<dbReference type="NCBIfam" id="NF003644">
    <property type="entry name" value="PRK05286.1-1"/>
    <property type="match status" value="1"/>
</dbReference>
<dbReference type="NCBIfam" id="NF003645">
    <property type="entry name" value="PRK05286.1-2"/>
    <property type="match status" value="1"/>
</dbReference>
<dbReference type="NCBIfam" id="NF003646">
    <property type="entry name" value="PRK05286.1-4"/>
    <property type="match status" value="1"/>
</dbReference>
<dbReference type="NCBIfam" id="NF003652">
    <property type="entry name" value="PRK05286.2-5"/>
    <property type="match status" value="1"/>
</dbReference>
<dbReference type="NCBIfam" id="TIGR01036">
    <property type="entry name" value="pyrD_sub2"/>
    <property type="match status" value="1"/>
</dbReference>
<dbReference type="PANTHER" id="PTHR48109:SF4">
    <property type="entry name" value="DIHYDROOROTATE DEHYDROGENASE (QUINONE), MITOCHONDRIAL"/>
    <property type="match status" value="1"/>
</dbReference>
<dbReference type="PANTHER" id="PTHR48109">
    <property type="entry name" value="DIHYDROOROTATE DEHYDROGENASE (QUINONE), MITOCHONDRIAL-RELATED"/>
    <property type="match status" value="1"/>
</dbReference>
<dbReference type="Pfam" id="PF01180">
    <property type="entry name" value="DHO_dh"/>
    <property type="match status" value="1"/>
</dbReference>
<dbReference type="PIRSF" id="PIRSF000164">
    <property type="entry name" value="DHO_oxidase"/>
    <property type="match status" value="1"/>
</dbReference>
<dbReference type="SUPFAM" id="SSF51395">
    <property type="entry name" value="FMN-linked oxidoreductases"/>
    <property type="match status" value="1"/>
</dbReference>
<dbReference type="PROSITE" id="PS00911">
    <property type="entry name" value="DHODEHASE_1"/>
    <property type="match status" value="1"/>
</dbReference>
<dbReference type="PROSITE" id="PS00912">
    <property type="entry name" value="DHODEHASE_2"/>
    <property type="match status" value="1"/>
</dbReference>